<reference key="1">
    <citation type="journal article" date="2011" name="Genome Biol.">
        <title>Genome sequence of the insect pathogenic fungus Cordyceps militaris, a valued traditional Chinese medicine.</title>
        <authorList>
            <person name="Zheng P."/>
            <person name="Xia Y."/>
            <person name="Xiao G."/>
            <person name="Xiong C."/>
            <person name="Hu X."/>
            <person name="Zhang S."/>
            <person name="Zheng H."/>
            <person name="Huang Y."/>
            <person name="Zhou Y."/>
            <person name="Wang S."/>
            <person name="Zhao G.-P."/>
            <person name="Liu X."/>
            <person name="St Leger R.J."/>
            <person name="Wang C."/>
        </authorList>
    </citation>
    <scope>NUCLEOTIDE SEQUENCE [LARGE SCALE GENOMIC DNA]</scope>
    <source>
        <strain>CM01</strain>
    </source>
</reference>
<reference key="2">
    <citation type="journal article" date="1998" name="Antimicrob. Agents Chemother.">
        <title>Antifungal activity of 3'-deoxyadenosine (cordycepin).</title>
        <authorList>
            <person name="Sugar A.M."/>
            <person name="McCaffrey R.P."/>
        </authorList>
    </citation>
    <scope>BIOTECHNOLOGY</scope>
</reference>
<reference key="3">
    <citation type="journal article" date="2017" name="Cell Chem. Biol.">
        <title>Fungal Cordycepin Biosynthesis Is Coupled with the Production of the Safeguard Molecule Pentostatin.</title>
        <authorList>
            <person name="Xia Y."/>
            <person name="Luo F."/>
            <person name="Shang Y."/>
            <person name="Chen P."/>
            <person name="Lu Y."/>
            <person name="Wang C."/>
        </authorList>
    </citation>
    <scope>FUNCTION</scope>
    <scope>CATALYTIC ACTIVITY</scope>
    <scope>DISRUPTION PHENOTYPE</scope>
</reference>
<reference key="4">
    <citation type="journal article" date="2018" name="Cell. Death. Discov.">
        <title>Cordycepin induces apoptosis of human ovarian cancer cells by inhibiting CCL5-mediated Akt/NF-kappaB signaling pathway.</title>
        <authorList>
            <person name="Cui Z.Y."/>
            <person name="Park S.J."/>
            <person name="Jo E."/>
            <person name="Hwang I.H."/>
            <person name="Lee K.B."/>
            <person name="Kim S.W."/>
            <person name="Kim D.J."/>
            <person name="Joo J.C."/>
            <person name="Hong S.H."/>
            <person name="Lee M.G."/>
            <person name="Jang I.S."/>
        </authorList>
    </citation>
    <scope>BIOTECHNOLOGY</scope>
</reference>
<reference key="5">
    <citation type="journal article" date="2019" name="J. Cancer">
        <title>Cordycepin Induces Apoptosis and G2/M Phase Arrest through the ERK Pathways in Esophageal Cancer Cells.</title>
        <authorList>
            <person name="Xu J.C."/>
            <person name="Zhou X.P."/>
            <person name="Wang X.A."/>
            <person name="Xu M.D."/>
            <person name="Chen T."/>
            <person name="Chen T.Y."/>
            <person name="Zhou P.H."/>
            <person name="Zhang Y.Q."/>
        </authorList>
    </citation>
    <scope>BIOTECHNOLOGY</scope>
</reference>
<reference key="6">
    <citation type="journal article" date="2019" name="J. Microbiol.">
        <title>Antimicrobial effect and proposed action mechanism of cordycepin against Escherichia coli and Bacillus subtilis.</title>
        <authorList>
            <person name="Jiang Q."/>
            <person name="Lou Z."/>
            <person name="Wang H."/>
            <person name="Chen C."/>
        </authorList>
    </citation>
    <scope>BIOTECHNOLOGY</scope>
</reference>
<reference key="7">
    <citation type="journal article" date="2020" name="Front. Microbiol.">
        <title>Transcriptome Analysis Reveals the Flexibility of Cordycepin Network in Cordyceps militaris Activated by L-Alanine Addition.</title>
        <authorList>
            <person name="Chen B.X."/>
            <person name="Wei T."/>
            <person name="Xue L.N."/>
            <person name="Zheng Q.W."/>
            <person name="Ye Z.W."/>
            <person name="Zou Y."/>
            <person name="Yang Y."/>
            <person name="Yun F."/>
            <person name="Guo L.Q."/>
            <person name="Lin J.F."/>
        </authorList>
    </citation>
    <scope>INDUCTION</scope>
</reference>
<reference key="8">
    <citation type="journal article" date="2020" name="Immunopharmacol. Immunotoxicol.">
        <title>Cordycepin exhibits a suppressive effect on T cells through inhibiting TCR signaling cascade in CFA-induced inflammation mice model.</title>
        <authorList>
            <person name="Wang X."/>
            <person name="Xi D."/>
            <person name="Mo J."/>
            <person name="Wang K."/>
            <person name="Luo Y."/>
            <person name="Xia E."/>
            <person name="Huang R."/>
            <person name="Luo S."/>
            <person name="Wei J."/>
            <person name="Ren Z."/>
            <person name="Pang H."/>
            <person name="Yang R."/>
        </authorList>
    </citation>
    <scope>BIOTECHNOLOGY</scope>
</reference>
<reference key="9">
    <citation type="journal article" date="2022" name="J. Biomol. Struct. Dyn.">
        <title>Cordycepin: a bioactive metabolite of Cordyceps militaris and polyadenylation inhibitor with therapeutic potential against COVID-19.</title>
        <authorList>
            <person name="Verma A.K."/>
        </authorList>
    </citation>
    <scope>BIOTECHNOLOGY</scope>
</reference>
<reference key="10">
    <citation type="journal article" date="2023" name="Int. Microbiol.">
        <title>A novel complementary pathway of cordycepin biosynthesis in Cordyceps militaris.</title>
        <authorList>
            <person name="Zhang H."/>
            <person name="Yang J."/>
            <person name="Luo S."/>
            <person name="Liu L."/>
            <person name="Yang G."/>
            <person name="Gao B."/>
            <person name="Fan H."/>
            <person name="Deng L."/>
            <person name="Yang M."/>
        </authorList>
    </citation>
    <scope>FUNCTION</scope>
</reference>
<reference key="11">
    <citation type="journal article" date="2024" name="Genes (Basel)">
        <title>Genomic and Transcriptome Analysis Reveals the Biosynthesis Network of Cordycepin in Cordyceps militaris.</title>
        <authorList>
            <person name="Chai L."/>
            <person name="Li J."/>
            <person name="Guo L."/>
            <person name="Zhang S."/>
            <person name="Chen F."/>
            <person name="Zhu W."/>
            <person name="Li Y."/>
        </authorList>
    </citation>
    <scope>INDUCTION</scope>
</reference>
<reference key="12">
    <citation type="journal article" date="2024" name="Int. J. Med. Mushrooms">
        <title>Evidence for Regulation of Cordycepin Biosynthesis by Transcription Factors Krueppel-Like Factor 4 and Retinoid X Receptor Alpha in Caterpillar Medicinal Mushroom Cordyceps militaris (Ascomycetes).</title>
        <authorList>
            <person name="Zhang H."/>
            <person name="Deng L."/>
            <person name="Luo S."/>
            <person name="Liu L."/>
            <person name="Yang G."/>
            <person name="Zhang Y."/>
            <person name="Gao B."/>
            <person name="Yang D."/>
            <person name="Wang X."/>
            <person name="Li S."/>
            <person name="Li X."/>
            <person name="Jiang Y."/>
            <person name="Lao W."/>
            <person name="Vriesekoop F."/>
        </authorList>
    </citation>
    <scope>INDUCTION</scope>
</reference>
<name>CNS3_CORMM</name>
<keyword id="KW-0067">ATP-binding</keyword>
<keyword id="KW-0418">Kinase</keyword>
<keyword id="KW-0436">Ligase</keyword>
<keyword id="KW-0547">Nucleotide-binding</keyword>
<keyword id="KW-0658">Purine biosynthesis</keyword>
<keyword id="KW-1185">Reference proteome</keyword>
<keyword id="KW-0808">Transferase</keyword>
<organism>
    <name type="scientific">Cordyceps militaris (strain CM01)</name>
    <name type="common">Caterpillar fungus</name>
    <dbReference type="NCBI Taxonomy" id="983644"/>
    <lineage>
        <taxon>Eukaryota</taxon>
        <taxon>Fungi</taxon>
        <taxon>Dikarya</taxon>
        <taxon>Ascomycota</taxon>
        <taxon>Pezizomycotina</taxon>
        <taxon>Sordariomycetes</taxon>
        <taxon>Hypocreomycetidae</taxon>
        <taxon>Hypocreales</taxon>
        <taxon>Cordycipitaceae</taxon>
        <taxon>Cordyceps</taxon>
    </lineage>
</organism>
<proteinExistence type="evidence at protein level"/>
<accession>G3JF10</accession>
<protein>
    <recommendedName>
        <fullName evidence="12">Bifunctional cordycepin biosynthesis cluster protein 3</fullName>
    </recommendedName>
    <domain>
        <recommendedName>
            <fullName evidence="12">Nucleoside/nucleotide kinase</fullName>
            <shortName evidence="12">NK</shortName>
            <ecNumber evidence="12">2.7.1.-</ecNumber>
        </recommendedName>
    </domain>
    <domain>
        <recommendedName>
            <fullName evidence="12">ATP phosphoribosyltransferase</fullName>
            <ecNumber evidence="1">2.4.2.-</ecNumber>
        </recommendedName>
    </domain>
</protein>
<feature type="chain" id="PRO_0000460182" description="Bifunctional cordycepin biosynthesis cluster protein 3">
    <location>
        <begin position="1"/>
        <end position="871"/>
    </location>
</feature>
<comment type="function">
    <text evidence="1 8">Nucleoside/nucleotide kinase; part of the gene cluster that mediates the biosynthesis of cordycepin (COR) and pentostatin (PTN), two adenosine analogs with related bioactivity profiles as both mimic adenosine and can inhibit some of the processes that are adenosine dependent (PubMed:29056419, PubMed:37987892). Within the pathway, cns3 catalyzes both the first step of cordycepin biosynthesis by phosphorylating adenosine into 3'-AMP via its kinase activity and the conversion of adenosine into pentostatin via its ATP phosphoribosyltransferase activity (PubMed:29056419). The first step of cordycepin biosynthesis involves hydroxyl phosphorylation of the 3'-OH position on adenosine to produce adenosine-3'-monophosphate (3'-AMP), catalyzed by kinase activity of cns3. Next, 3'-AMP is dephosphorylated to 2'-carbonyl-3'-deoxyadenosine (2'-C-3'-dA) by cns2, which is finally converted to cordycepin (3'-deoxyadenosine) by the oxidoreductase cns1 (PubMed:29056419).</text>
</comment>
<comment type="pathway">
    <text evidence="12">Secondary metabolite biosynthesis.</text>
</comment>
<comment type="induction">
    <text evidence="6 9 10">Expression slightly increases by addition of L-alanine that activates cordycepin production, as well as during the development of fruiting bodies (PubMed:32390960, PubMed:38790255). Expression is positively regulated by the two key transcription factors Kruppel-like factor 4 (Klf4) and retinoid X receptor alpha (Rxra) (PubMed:39171629).</text>
</comment>
<comment type="disruption phenotype">
    <text evidence="1">Impairs the production of cordycepin and pentostatin.</text>
</comment>
<comment type="biotechnology">
    <text evidence="2 3 4 5 7 11">Cordycepin has antitumor, antibacterial, antifungal, antivirus, and immune regulation properties; thus, cordycepin has important value in commerce, medicine, and scientific research.</text>
</comment>
<comment type="miscellaneous">
    <text evidence="1">Cordycepin and pentostatin biosynthesis coupling is an important point of metabolic regulation where pentostatin safeguards cordycepin from deamination by inhibiting adenosine deaminase (ADA) activity. ADA is not inhibited until cordycepin reaches self-toxic levels, at which point ADA derepression occurs allowing for detoxification of cordycepin to 3'-deoxyinosine.</text>
</comment>
<dbReference type="EC" id="2.7.1.-" evidence="12"/>
<dbReference type="EC" id="2.4.2.-" evidence="1"/>
<dbReference type="EMBL" id="JH126401">
    <property type="protein sequence ID" value="EGX93066.1"/>
    <property type="molecule type" value="Genomic_DNA"/>
</dbReference>
<dbReference type="RefSeq" id="XP_006669649.1">
    <property type="nucleotide sequence ID" value="XM_006669586.1"/>
</dbReference>
<dbReference type="SMR" id="G3JF10"/>
<dbReference type="STRING" id="983644.G3JF10"/>
<dbReference type="GeneID" id="18166461"/>
<dbReference type="KEGG" id="cmt:CCM_04438"/>
<dbReference type="VEuPathDB" id="FungiDB:CCM_04438"/>
<dbReference type="eggNOG" id="ENOG502SJHW">
    <property type="taxonomic scope" value="Eukaryota"/>
</dbReference>
<dbReference type="HOGENOM" id="CLU_331188_0_0_1"/>
<dbReference type="InParanoid" id="G3JF10"/>
<dbReference type="OMA" id="FTIQHYL"/>
<dbReference type="OrthoDB" id="3743777at2759"/>
<dbReference type="Proteomes" id="UP000001610">
    <property type="component" value="Unassembled WGS sequence"/>
</dbReference>
<dbReference type="GO" id="GO:0005524">
    <property type="term" value="F:ATP binding"/>
    <property type="evidence" value="ECO:0007669"/>
    <property type="project" value="UniProtKB-KW"/>
</dbReference>
<dbReference type="GO" id="GO:0016301">
    <property type="term" value="F:kinase activity"/>
    <property type="evidence" value="ECO:0007669"/>
    <property type="project" value="UniProtKB-KW"/>
</dbReference>
<dbReference type="GO" id="GO:0016874">
    <property type="term" value="F:ligase activity"/>
    <property type="evidence" value="ECO:0007669"/>
    <property type="project" value="UniProtKB-KW"/>
</dbReference>
<dbReference type="GO" id="GO:0006164">
    <property type="term" value="P:purine nucleotide biosynthetic process"/>
    <property type="evidence" value="ECO:0007669"/>
    <property type="project" value="UniProtKB-KW"/>
</dbReference>
<dbReference type="Gene3D" id="3.30.470.20">
    <property type="entry name" value="ATP-grasp fold, B domain"/>
    <property type="match status" value="1"/>
</dbReference>
<dbReference type="Gene3D" id="3.30.200.20">
    <property type="entry name" value="Phosphorylase Kinase, domain 1"/>
    <property type="match status" value="1"/>
</dbReference>
<dbReference type="InterPro" id="IPR027417">
    <property type="entry name" value="P-loop_NTPase"/>
</dbReference>
<dbReference type="InterPro" id="IPR028923">
    <property type="entry name" value="SAICAR_synt/ADE2_N"/>
</dbReference>
<dbReference type="Pfam" id="PF01259">
    <property type="entry name" value="SAICAR_synt"/>
    <property type="match status" value="1"/>
</dbReference>
<dbReference type="SUPFAM" id="SSF52540">
    <property type="entry name" value="P-loop containing nucleoside triphosphate hydrolases"/>
    <property type="match status" value="1"/>
</dbReference>
<dbReference type="SUPFAM" id="SSF53850">
    <property type="entry name" value="Periplasmic binding protein-like II"/>
    <property type="match status" value="1"/>
</dbReference>
<sequence length="871" mass="96468">MSESTAYTIILHGNDATGKSTLVPALRAAGEVIYARGDDDATLEDTIVVRSFDKFTLRLADDDRGPLPQSYTDKDGVQRRIVRIILDADLDVLQARLAKRPSTDQWESEKSLFYFRARFLGHQELAAYHGLPVINTGEKSLDETMAEIIALARNPETLALFSKLALRTLTPEDVASLADRRAVIAGVDYAKRLEDIIAAECGETSLFTPEDVRAQCLEDPGLVHALVNHHDNLHDAEAPLRLRQIVEGESKQIYKVESPLTHHFDNLVLVFLKPTIYSHSKQATAEISGLSAVRASGSRLFLEMLHRAGISHTYHGLSAHGLIWARSTEITQIETVYKELCAGTDKHSFFGMAADPNVTLPTGQYKRGPYVRFDWRNPNHVYNGVNPATHPFYHLMEASVGKNAFYDKYLTGRAKPLGDKCVPEELVHSVQAVEASVDWTTRIFFTIQHYLHQIGLEVQDGCVMLDPTGRIMWSEINQDCMRIKRRERTETTNGSHQGVFDKDVWRAGGSSVKEAILDKWTQLNGLLREHLAGRPFHENEMVAAFEPYGMHATEVLADKTLTLTPRYRALYERLATHDRSLLRSGGSADKAASERLLALMQEHIWQAIAAVPPLNGHDEAKRMVRLANTFARRVGLPPAEVSALSDADAETILGRTATPPGSKAIGVTANKYADKTDEFALAELGIKLLRPTGRCLRITYELVDQAKYTKAFGAGVTVHFVPTRPKDMPGLLAQGMLDGAVTYSSVMDNFPTVARLVASTPDADISLALIRRRGQAIDPHGWSADRPARIVAEHGRMVRAHLAGLGVSPTTYEIQHVLGSSESYLVNDPRETYLLCDAVIATGGTIQENDLDVWQVVKNKGELLVGLYQRV</sequence>
<evidence type="ECO:0000269" key="1">
    <source>
    </source>
</evidence>
<evidence type="ECO:0000269" key="2">
    <source>
    </source>
</evidence>
<evidence type="ECO:0000269" key="3">
    <source>
    </source>
</evidence>
<evidence type="ECO:0000269" key="4">
    <source>
    </source>
</evidence>
<evidence type="ECO:0000269" key="5">
    <source>
    </source>
</evidence>
<evidence type="ECO:0000269" key="6">
    <source>
    </source>
</evidence>
<evidence type="ECO:0000269" key="7">
    <source>
    </source>
</evidence>
<evidence type="ECO:0000269" key="8">
    <source>
    </source>
</evidence>
<evidence type="ECO:0000269" key="9">
    <source>
    </source>
</evidence>
<evidence type="ECO:0000269" key="10">
    <source>
    </source>
</evidence>
<evidence type="ECO:0000269" key="11">
    <source>
    </source>
</evidence>
<evidence type="ECO:0000303" key="12">
    <source>
    </source>
</evidence>
<gene>
    <name evidence="12" type="primary">cns3</name>
    <name type="ORF">CCM_04438</name>
</gene>